<name>PRVB3_MERHU</name>
<feature type="chain" id="PRO_0000399424" description="Parvalbumin beta 3">
    <location>
        <begin position="1"/>
        <end position="86" status="greater than"/>
    </location>
</feature>
<feature type="domain" description="EF-hand" evidence="5">
    <location>
        <begin position="35"/>
        <end position="70"/>
    </location>
</feature>
<feature type="binding site" evidence="5">
    <location>
        <position position="48"/>
    </location>
    <ligand>
        <name>Ca(2+)</name>
        <dbReference type="ChEBI" id="CHEBI:29108"/>
        <label>1</label>
    </ligand>
</feature>
<feature type="binding site" evidence="5">
    <location>
        <position position="50"/>
    </location>
    <ligand>
        <name>Ca(2+)</name>
        <dbReference type="ChEBI" id="CHEBI:29108"/>
        <label>1</label>
    </ligand>
</feature>
<feature type="binding site" evidence="5">
    <location>
        <position position="52"/>
    </location>
    <ligand>
        <name>Ca(2+)</name>
        <dbReference type="ChEBI" id="CHEBI:29108"/>
        <label>1</label>
    </ligand>
</feature>
<feature type="binding site" evidence="1">
    <location>
        <position position="54"/>
    </location>
    <ligand>
        <name>Ca(2+)</name>
        <dbReference type="ChEBI" id="CHEBI:29108"/>
        <label>1</label>
    </ligand>
</feature>
<feature type="binding site" evidence="1">
    <location>
        <position position="56"/>
    </location>
    <ligand>
        <name>Ca(2+)</name>
        <dbReference type="ChEBI" id="CHEBI:29108"/>
        <label>1</label>
    </ligand>
</feature>
<feature type="binding site" evidence="5">
    <location>
        <position position="59"/>
    </location>
    <ligand>
        <name>Ca(2+)</name>
        <dbReference type="ChEBI" id="CHEBI:29108"/>
        <label>1</label>
    </ligand>
</feature>
<feature type="modified residue" description="N-acetylalanine" evidence="6">
    <location>
        <position position="1"/>
    </location>
</feature>
<feature type="unsure residue" description="L or I" evidence="6">
    <location>
        <position position="6"/>
    </location>
</feature>
<feature type="unsure residue" description="I or L" evidence="6">
    <location>
        <position position="11"/>
    </location>
</feature>
<feature type="unsure residue" description="K or Q" evidence="6">
    <location>
        <position position="12"/>
    </location>
</feature>
<feature type="unsure residue" description="L or I" evidence="6">
    <location>
        <position position="15"/>
    </location>
</feature>
<feature type="unsure residue" description="K or Q" evidence="6">
    <location>
        <position position="27"/>
    </location>
</feature>
<feature type="unsure residue" description="K or Q" evidence="6">
    <location>
        <position position="31"/>
    </location>
</feature>
<feature type="unsure residue" description="L or I" evidence="6">
    <location>
        <position position="35"/>
    </location>
</feature>
<feature type="unsure residue" description="K or Q" evidence="6">
    <location>
        <position position="41"/>
    </location>
</feature>
<feature type="unsure residue" description="K or Q" evidence="6">
    <location>
        <position position="42"/>
    </location>
</feature>
<feature type="unsure residue" description="I or L" evidence="6">
    <location>
        <position position="46"/>
    </location>
</feature>
<feature type="unsure residue" description="I or L" evidence="6">
    <location>
        <position position="47"/>
    </location>
</feature>
<feature type="unsure residue" description="Q or K" evidence="6">
    <location>
        <position position="49"/>
    </location>
</feature>
<feature type="unsure residue" description="I or L" evidence="6">
    <location>
        <position position="55"/>
    </location>
</feature>
<feature type="unsure residue" description="L or I" evidence="6">
    <location>
        <position position="60"/>
    </location>
</feature>
<feature type="unsure residue" description="K or Q" evidence="6">
    <location>
        <position position="61"/>
    </location>
</feature>
<feature type="unsure residue" description="L or I" evidence="6">
    <location>
        <position position="62"/>
    </location>
</feature>
<feature type="unsure residue" description="L or I" evidence="6">
    <location>
        <position position="64"/>
    </location>
</feature>
<feature type="unsure residue" description="Q or K" evidence="6">
    <location>
        <position position="65"/>
    </location>
</feature>
<feature type="unsure residue" description="L or I" evidence="6">
    <location>
        <position position="74"/>
    </location>
</feature>
<feature type="unsure residue" description="K or Q" evidence="6">
    <location>
        <position position="80"/>
    </location>
</feature>
<feature type="unsure residue" description="L or I" evidence="6">
    <location>
        <position position="83"/>
    </location>
</feature>
<feature type="unsure residue" description="K or Q" evidence="6">
    <location>
        <position position="85"/>
    </location>
</feature>
<feature type="non-consecutive residues" evidence="7">
    <location>
        <begin position="35"/>
        <end position="36"/>
    </location>
</feature>
<feature type="non-consecutive residues" evidence="7">
    <location>
        <begin position="80"/>
        <end position="81"/>
    </location>
</feature>
<feature type="non-terminal residue" evidence="7">
    <location>
        <position position="86"/>
    </location>
</feature>
<organism>
    <name type="scientific">Merluccius hubbsi</name>
    <name type="common">Argentine hake</name>
    <name type="synonym">Merluccius gayi</name>
    <dbReference type="NCBI Taxonomy" id="89949"/>
    <lineage>
        <taxon>Eukaryota</taxon>
        <taxon>Metazoa</taxon>
        <taxon>Chordata</taxon>
        <taxon>Craniata</taxon>
        <taxon>Vertebrata</taxon>
        <taxon>Euteleostomi</taxon>
        <taxon>Actinopterygii</taxon>
        <taxon>Neopterygii</taxon>
        <taxon>Teleostei</taxon>
        <taxon>Neoteleostei</taxon>
        <taxon>Acanthomorphata</taxon>
        <taxon>Zeiogadaria</taxon>
        <taxon>Gadariae</taxon>
        <taxon>Gadiformes</taxon>
        <taxon>Gadoidei</taxon>
        <taxon>Merlucciidae</taxon>
        <taxon>Merluccius</taxon>
    </lineage>
</organism>
<sequence>AFAGVLADADIKAALAGCAAADSFNYKTFFKACGLSPEEVKKFFAIIDQDHSGFIEEEELKLFLQTFSAGARALSDAETKVALVKA</sequence>
<evidence type="ECO:0000250" key="1">
    <source>
        <dbReference type="UniProtKB" id="P02621"/>
    </source>
</evidence>
<evidence type="ECO:0000250" key="2">
    <source>
        <dbReference type="UniProtKB" id="P02622"/>
    </source>
</evidence>
<evidence type="ECO:0000250" key="3">
    <source>
        <dbReference type="UniProtKB" id="P02624"/>
    </source>
</evidence>
<evidence type="ECO:0000255" key="4"/>
<evidence type="ECO:0000255" key="5">
    <source>
        <dbReference type="PROSITE-ProRule" id="PRU00448"/>
    </source>
</evidence>
<evidence type="ECO:0000269" key="6">
    <source>
    </source>
</evidence>
<evidence type="ECO:0000303" key="7">
    <source>
    </source>
</evidence>
<evidence type="ECO:0000305" key="8"/>
<reference evidence="8" key="1">
    <citation type="journal article" date="2010" name="J. Proteome Res.">
        <title>Extensive de novo sequencing of new parvalbumin isoforms using a novel combination of bottom-up proteomics, accurate molecular mass measurement by FTICR-MS, and selected MS/MS ion monitoring.</title>
        <authorList>
            <person name="Carrera M."/>
            <person name="Canas B."/>
            <person name="Vazquez J."/>
            <person name="Gallardo J.M."/>
        </authorList>
    </citation>
    <scope>PROTEIN SEQUENCE</scope>
    <scope>ACETYLATION AT ALA-1</scope>
    <source>
        <tissue evidence="6">Muscle</tissue>
    </source>
</reference>
<dbReference type="SMR" id="P86763"/>
<dbReference type="Allergome" id="7644">
    <property type="allergen name" value="Mer hu 1"/>
</dbReference>
<dbReference type="iPTMnet" id="P86763"/>
<dbReference type="GO" id="GO:0005737">
    <property type="term" value="C:cytoplasm"/>
    <property type="evidence" value="ECO:0007669"/>
    <property type="project" value="TreeGrafter"/>
</dbReference>
<dbReference type="GO" id="GO:0005509">
    <property type="term" value="F:calcium ion binding"/>
    <property type="evidence" value="ECO:0007669"/>
    <property type="project" value="InterPro"/>
</dbReference>
<dbReference type="Gene3D" id="1.10.238.10">
    <property type="entry name" value="EF-hand"/>
    <property type="match status" value="1"/>
</dbReference>
<dbReference type="InterPro" id="IPR011992">
    <property type="entry name" value="EF-hand-dom_pair"/>
</dbReference>
<dbReference type="InterPro" id="IPR018247">
    <property type="entry name" value="EF_Hand_1_Ca_BS"/>
</dbReference>
<dbReference type="InterPro" id="IPR002048">
    <property type="entry name" value="EF_hand_dom"/>
</dbReference>
<dbReference type="InterPro" id="IPR008080">
    <property type="entry name" value="Parvalbumin"/>
</dbReference>
<dbReference type="PANTHER" id="PTHR11653:SF12">
    <property type="entry name" value="PARVALBUMIN"/>
    <property type="match status" value="1"/>
</dbReference>
<dbReference type="PANTHER" id="PTHR11653">
    <property type="entry name" value="PARVALBUMIN ALPHA"/>
    <property type="match status" value="1"/>
</dbReference>
<dbReference type="Pfam" id="PF00036">
    <property type="entry name" value="EF-hand_1"/>
    <property type="match status" value="1"/>
</dbReference>
<dbReference type="PRINTS" id="PR01697">
    <property type="entry name" value="PARVALBUMIN"/>
</dbReference>
<dbReference type="SMART" id="SM00054">
    <property type="entry name" value="EFh"/>
    <property type="match status" value="1"/>
</dbReference>
<dbReference type="SUPFAM" id="SSF47473">
    <property type="entry name" value="EF-hand"/>
    <property type="match status" value="1"/>
</dbReference>
<dbReference type="PROSITE" id="PS00018">
    <property type="entry name" value="EF_HAND_1"/>
    <property type="match status" value="1"/>
</dbReference>
<dbReference type="PROSITE" id="PS50222">
    <property type="entry name" value="EF_HAND_2"/>
    <property type="match status" value="1"/>
</dbReference>
<accession>P86763</accession>
<protein>
    <recommendedName>
        <fullName evidence="7">Parvalbumin beta 3</fullName>
    </recommendedName>
</protein>
<comment type="function">
    <text evidence="2 3">In muscle, parvalbumin is thought to be involved in relaxation after contraction. It binds two calcium ions (By similarity).</text>
</comment>
<comment type="miscellaneous">
    <text evidence="2 6">Is regarded as an important allergen.</text>
</comment>
<comment type="miscellaneous">
    <text evidence="6">On the 2D-gel the determined pI of this protein is: 4.09, its MW is: 11.35 kDa.</text>
</comment>
<comment type="similarity">
    <text evidence="4">Belongs to the parvalbumin family.</text>
</comment>
<keyword id="KW-0007">Acetylation</keyword>
<keyword id="KW-0020">Allergen</keyword>
<keyword id="KW-0106">Calcium</keyword>
<keyword id="KW-0903">Direct protein sequencing</keyword>
<keyword id="KW-0479">Metal-binding</keyword>
<keyword id="KW-0514">Muscle protein</keyword>
<proteinExistence type="evidence at protein level"/>